<evidence type="ECO:0000250" key="1"/>
<evidence type="ECO:0000255" key="2">
    <source>
        <dbReference type="PROSITE-ProRule" id="PRU00034"/>
    </source>
</evidence>
<evidence type="ECO:0000256" key="3">
    <source>
        <dbReference type="SAM" id="MobiDB-lite"/>
    </source>
</evidence>
<organism>
    <name type="scientific">Pongo abelii</name>
    <name type="common">Sumatran orangutan</name>
    <name type="synonym">Pongo pygmaeus abelii</name>
    <dbReference type="NCBI Taxonomy" id="9601"/>
    <lineage>
        <taxon>Eukaryota</taxon>
        <taxon>Metazoa</taxon>
        <taxon>Chordata</taxon>
        <taxon>Craniata</taxon>
        <taxon>Vertebrata</taxon>
        <taxon>Euteleostomi</taxon>
        <taxon>Mammalia</taxon>
        <taxon>Eutheria</taxon>
        <taxon>Euarchontoglires</taxon>
        <taxon>Primates</taxon>
        <taxon>Haplorrhini</taxon>
        <taxon>Catarrhini</taxon>
        <taxon>Hominidae</taxon>
        <taxon>Pongo</taxon>
    </lineage>
</organism>
<comment type="function">
    <text evidence="1">May be required for ribosome biogenesis.</text>
</comment>
<comment type="subcellular location">
    <subcellularLocation>
        <location evidence="1">Nucleus</location>
        <location evidence="1">Nucleolus</location>
    </subcellularLocation>
</comment>
<proteinExistence type="evidence at transcript level"/>
<keyword id="KW-0539">Nucleus</keyword>
<keyword id="KW-1185">Reference proteome</keyword>
<keyword id="KW-0690">Ribosome biogenesis</keyword>
<keyword id="KW-0694">RNA-binding</keyword>
<keyword id="KW-0698">rRNA processing</keyword>
<keyword id="KW-0699">rRNA-binding</keyword>
<sequence>MAKAGDKSSSSGKKSLKRKAAAEELQEAAGAGDVATESGVQPPKAAAFPPGFSISEIKNKERRHLMFTRWKQQQRKEKLAAKKKLKKEREALGDKAPPKPVPKTIDNQRVYDETTVDPNDEEVAYDEATDEFASYFNKQTSPKILITTSDRPHGRTVRLCEQLSTVIPNSHVYYRRGLALKKIIPQCIARDFTDLIVINEDRKTPNGLILSHLPNGPTAHFKMSSVRLRKEIKRRGKDPTEHIPEIILNNFTTRLGHSIGRMFASLFPHNPQFIGRQVATFHNQRDYIFFRFHRYIFRSEKKVGIQELGPRFTLKLRSLQKGTFDSKYGEYEWVHKPREMDTSRRKFHL</sequence>
<name>RPF1_PONAB</name>
<reference key="1">
    <citation type="submission" date="2004-11" db="EMBL/GenBank/DDBJ databases">
        <authorList>
            <consortium name="The German cDNA consortium"/>
        </authorList>
    </citation>
    <scope>NUCLEOTIDE SEQUENCE [LARGE SCALE MRNA]</scope>
    <source>
        <tissue>Brain cortex</tissue>
    </source>
</reference>
<protein>
    <recommendedName>
        <fullName>Ribosome production factor 1</fullName>
    </recommendedName>
    <alternativeName>
        <fullName>Brix domain-containing protein 5</fullName>
    </alternativeName>
    <alternativeName>
        <fullName>Ribosome biogenesis protein RPF1</fullName>
    </alternativeName>
</protein>
<gene>
    <name type="primary">RPF1</name>
    <name type="synonym">BXDC5</name>
</gene>
<accession>Q5R631</accession>
<feature type="chain" id="PRO_0000120250" description="Ribosome production factor 1">
    <location>
        <begin position="1"/>
        <end position="349"/>
    </location>
</feature>
<feature type="domain" description="Brix" evidence="2">
    <location>
        <begin position="142"/>
        <end position="325"/>
    </location>
</feature>
<feature type="region of interest" description="Disordered" evidence="3">
    <location>
        <begin position="1"/>
        <end position="105"/>
    </location>
</feature>
<feature type="region of interest" description="RNA-binding" evidence="1">
    <location>
        <begin position="303"/>
        <end position="320"/>
    </location>
</feature>
<feature type="compositionally biased region" description="Basic and acidic residues" evidence="3">
    <location>
        <begin position="87"/>
        <end position="97"/>
    </location>
</feature>
<dbReference type="EMBL" id="CR860667">
    <property type="protein sequence ID" value="CAH92785.1"/>
    <property type="molecule type" value="mRNA"/>
</dbReference>
<dbReference type="RefSeq" id="NP_001126626.1">
    <property type="nucleotide sequence ID" value="NM_001133154.1"/>
</dbReference>
<dbReference type="SMR" id="Q5R631"/>
<dbReference type="FunCoup" id="Q5R631">
    <property type="interactions" value="1387"/>
</dbReference>
<dbReference type="STRING" id="9601.ENSPPYP00000001396"/>
<dbReference type="Ensembl" id="ENSPPYT00000001441.3">
    <property type="protein sequence ID" value="ENSPPYP00000001396.3"/>
    <property type="gene ID" value="ENSPPYG00000001206.3"/>
</dbReference>
<dbReference type="GeneID" id="100173623"/>
<dbReference type="KEGG" id="pon:100173623"/>
<dbReference type="CTD" id="80135"/>
<dbReference type="eggNOG" id="KOG2780">
    <property type="taxonomic scope" value="Eukaryota"/>
</dbReference>
<dbReference type="GeneTree" id="ENSGT00940000153231"/>
<dbReference type="HOGENOM" id="CLU_040063_1_0_1"/>
<dbReference type="InParanoid" id="Q5R631"/>
<dbReference type="OMA" id="AWIISNK"/>
<dbReference type="OrthoDB" id="10253204at2759"/>
<dbReference type="Proteomes" id="UP000001595">
    <property type="component" value="Chromosome 1"/>
</dbReference>
<dbReference type="GO" id="GO:0005730">
    <property type="term" value="C:nucleolus"/>
    <property type="evidence" value="ECO:0000250"/>
    <property type="project" value="UniProtKB"/>
</dbReference>
<dbReference type="GO" id="GO:0030687">
    <property type="term" value="C:preribosome, large subunit precursor"/>
    <property type="evidence" value="ECO:0007669"/>
    <property type="project" value="TreeGrafter"/>
</dbReference>
<dbReference type="GO" id="GO:0003723">
    <property type="term" value="F:RNA binding"/>
    <property type="evidence" value="ECO:0000250"/>
    <property type="project" value="UniProtKB"/>
</dbReference>
<dbReference type="GO" id="GO:0042134">
    <property type="term" value="F:rRNA primary transcript binding"/>
    <property type="evidence" value="ECO:0007669"/>
    <property type="project" value="InterPro"/>
</dbReference>
<dbReference type="GO" id="GO:0000460">
    <property type="term" value="P:maturation of 5.8S rRNA"/>
    <property type="evidence" value="ECO:0007669"/>
    <property type="project" value="TreeGrafter"/>
</dbReference>
<dbReference type="GO" id="GO:0000470">
    <property type="term" value="P:maturation of LSU-rRNA"/>
    <property type="evidence" value="ECO:0007669"/>
    <property type="project" value="TreeGrafter"/>
</dbReference>
<dbReference type="FunFam" id="3.40.50.10480:FF:000002">
    <property type="entry name" value="Ribosome production factor 1"/>
    <property type="match status" value="1"/>
</dbReference>
<dbReference type="Gene3D" id="3.40.50.10480">
    <property type="entry name" value="Probable brix-domain ribosomal biogenesis protein"/>
    <property type="match status" value="1"/>
</dbReference>
<dbReference type="InterPro" id="IPR007109">
    <property type="entry name" value="Brix"/>
</dbReference>
<dbReference type="InterPro" id="IPR044281">
    <property type="entry name" value="IMP4/RPF1"/>
</dbReference>
<dbReference type="PANTHER" id="PTHR22734:SF3">
    <property type="entry name" value="RIBOSOME PRODUCTION FACTOR 1"/>
    <property type="match status" value="1"/>
</dbReference>
<dbReference type="PANTHER" id="PTHR22734">
    <property type="entry name" value="U3 SMALL NUCLEOLAR RIBONUCLEOPROTEIN PROTEIN IMP4"/>
    <property type="match status" value="1"/>
</dbReference>
<dbReference type="Pfam" id="PF04427">
    <property type="entry name" value="Brix"/>
    <property type="match status" value="1"/>
</dbReference>
<dbReference type="SMART" id="SM00879">
    <property type="entry name" value="Brix"/>
    <property type="match status" value="1"/>
</dbReference>
<dbReference type="SUPFAM" id="SSF52954">
    <property type="entry name" value="Class II aaRS ABD-related"/>
    <property type="match status" value="1"/>
</dbReference>
<dbReference type="PROSITE" id="PS50833">
    <property type="entry name" value="BRIX"/>
    <property type="match status" value="1"/>
</dbReference>